<gene>
    <name evidence="1" type="primary">ackA</name>
    <name type="ordered locus">EUBREC_1494</name>
</gene>
<proteinExistence type="inferred from homology"/>
<reference key="1">
    <citation type="journal article" date="2009" name="Proc. Natl. Acad. Sci. U.S.A.">
        <title>Characterizing a model human gut microbiota composed of members of its two dominant bacterial phyla.</title>
        <authorList>
            <person name="Mahowald M.A."/>
            <person name="Rey F.E."/>
            <person name="Seedorf H."/>
            <person name="Turnbaugh P.J."/>
            <person name="Fulton R.S."/>
            <person name="Wollam A."/>
            <person name="Shah N."/>
            <person name="Wang C."/>
            <person name="Magrini V."/>
            <person name="Wilson R.K."/>
            <person name="Cantarel B.L."/>
            <person name="Coutinho P.M."/>
            <person name="Henrissat B."/>
            <person name="Crock L.W."/>
            <person name="Russell A."/>
            <person name="Verberkmoes N.C."/>
            <person name="Hettich R.L."/>
            <person name="Gordon J.I."/>
        </authorList>
    </citation>
    <scope>NUCLEOTIDE SEQUENCE [LARGE SCALE GENOMIC DNA]</scope>
    <source>
        <strain>ATCC 33656 / DSM 3377 / JCM 17463 / KCTC 5835 / LMG 30912 / VPI 0990</strain>
    </source>
</reference>
<organism>
    <name type="scientific">Agathobacter rectalis (strain ATCC 33656 / DSM 3377 / JCM 17463 / KCTC 5835 / VPI 0990)</name>
    <name type="common">Eubacterium rectale</name>
    <dbReference type="NCBI Taxonomy" id="515619"/>
    <lineage>
        <taxon>Bacteria</taxon>
        <taxon>Bacillati</taxon>
        <taxon>Bacillota</taxon>
        <taxon>Clostridia</taxon>
        <taxon>Lachnospirales</taxon>
        <taxon>Lachnospiraceae</taxon>
        <taxon>Agathobacter</taxon>
    </lineage>
</organism>
<evidence type="ECO:0000255" key="1">
    <source>
        <dbReference type="HAMAP-Rule" id="MF_00020"/>
    </source>
</evidence>
<feature type="chain" id="PRO_1000201903" description="Acetate kinase">
    <location>
        <begin position="1"/>
        <end position="397"/>
    </location>
</feature>
<feature type="active site" description="Proton donor/acceptor" evidence="1">
    <location>
        <position position="147"/>
    </location>
</feature>
<feature type="binding site" evidence="1">
    <location>
        <position position="7"/>
    </location>
    <ligand>
        <name>Mg(2+)</name>
        <dbReference type="ChEBI" id="CHEBI:18420"/>
    </ligand>
</feature>
<feature type="binding site" evidence="1">
    <location>
        <position position="14"/>
    </location>
    <ligand>
        <name>ATP</name>
        <dbReference type="ChEBI" id="CHEBI:30616"/>
    </ligand>
</feature>
<feature type="binding site" evidence="1">
    <location>
        <position position="90"/>
    </location>
    <ligand>
        <name>substrate</name>
    </ligand>
</feature>
<feature type="binding site" evidence="1">
    <location>
        <begin position="207"/>
        <end position="211"/>
    </location>
    <ligand>
        <name>ATP</name>
        <dbReference type="ChEBI" id="CHEBI:30616"/>
    </ligand>
</feature>
<feature type="binding site" evidence="1">
    <location>
        <begin position="282"/>
        <end position="284"/>
    </location>
    <ligand>
        <name>ATP</name>
        <dbReference type="ChEBI" id="CHEBI:30616"/>
    </ligand>
</feature>
<feature type="binding site" evidence="1">
    <location>
        <begin position="330"/>
        <end position="334"/>
    </location>
    <ligand>
        <name>ATP</name>
        <dbReference type="ChEBI" id="CHEBI:30616"/>
    </ligand>
</feature>
<feature type="binding site" evidence="1">
    <location>
        <position position="384"/>
    </location>
    <ligand>
        <name>Mg(2+)</name>
        <dbReference type="ChEBI" id="CHEBI:18420"/>
    </ligand>
</feature>
<feature type="site" description="Transition state stabilizer" evidence="1">
    <location>
        <position position="179"/>
    </location>
</feature>
<feature type="site" description="Transition state stabilizer" evidence="1">
    <location>
        <position position="240"/>
    </location>
</feature>
<accession>C4Z917</accession>
<sequence>MNVLVINCGSSSLKYQLINSDSEEVLAKGLCERIGIDGRLVYQKEGLDKEITEAPMPTHKEAIQMVLDALVNPKTGAVKSLAEIDAVGHRVVHGGEKFSDSVVITEEVIAQVEECNDLAPLHNPANIIGIRACQALMPNVPMVGVFDTAFHQTMPEKAYLYGLPYEYYEKYKVRRYGFHGTSHSFVSKEAASYLGMDLNNSKIIVAHLGNGASVSAVLNGKCVDTSMGLTPLEGLVMGTRSGDIDPSIMEFIAKKENLDIDGVMNVLNKKSGVAGMSGVSSDFRDLEAAYNEGNERAIAAVEVFSYRVAKYIGAYAAAMNGVDAIAFTAGIGENTSFVREKIMAYLGYLGIKIDRVTNDKTRGVEALISTADSSVKVCVIPTNEELAICRETVKLVG</sequence>
<keyword id="KW-0067">ATP-binding</keyword>
<keyword id="KW-0963">Cytoplasm</keyword>
<keyword id="KW-0418">Kinase</keyword>
<keyword id="KW-0460">Magnesium</keyword>
<keyword id="KW-0479">Metal-binding</keyword>
<keyword id="KW-0547">Nucleotide-binding</keyword>
<keyword id="KW-0808">Transferase</keyword>
<comment type="function">
    <text evidence="1">Catalyzes the formation of acetyl phosphate from acetate and ATP. Can also catalyze the reverse reaction.</text>
</comment>
<comment type="catalytic activity">
    <reaction evidence="1">
        <text>acetate + ATP = acetyl phosphate + ADP</text>
        <dbReference type="Rhea" id="RHEA:11352"/>
        <dbReference type="ChEBI" id="CHEBI:22191"/>
        <dbReference type="ChEBI" id="CHEBI:30089"/>
        <dbReference type="ChEBI" id="CHEBI:30616"/>
        <dbReference type="ChEBI" id="CHEBI:456216"/>
        <dbReference type="EC" id="2.7.2.1"/>
    </reaction>
</comment>
<comment type="cofactor">
    <cofactor evidence="1">
        <name>Mg(2+)</name>
        <dbReference type="ChEBI" id="CHEBI:18420"/>
    </cofactor>
    <cofactor evidence="1">
        <name>Mn(2+)</name>
        <dbReference type="ChEBI" id="CHEBI:29035"/>
    </cofactor>
    <text evidence="1">Mg(2+). Can also accept Mn(2+).</text>
</comment>
<comment type="pathway">
    <text evidence="1">Metabolic intermediate biosynthesis; acetyl-CoA biosynthesis; acetyl-CoA from acetate: step 1/2.</text>
</comment>
<comment type="subunit">
    <text evidence="1">Homodimer.</text>
</comment>
<comment type="subcellular location">
    <subcellularLocation>
        <location evidence="1">Cytoplasm</location>
    </subcellularLocation>
</comment>
<comment type="similarity">
    <text evidence="1">Belongs to the acetokinase family.</text>
</comment>
<dbReference type="EC" id="2.7.2.1" evidence="1"/>
<dbReference type="EMBL" id="CP001107">
    <property type="protein sequence ID" value="ACR75248.1"/>
    <property type="molecule type" value="Genomic_DNA"/>
</dbReference>
<dbReference type="RefSeq" id="WP_012742347.1">
    <property type="nucleotide sequence ID" value="NC_012781.1"/>
</dbReference>
<dbReference type="SMR" id="C4Z917"/>
<dbReference type="STRING" id="515619.EUBREC_1494"/>
<dbReference type="PaxDb" id="515619-EUBREC_1494"/>
<dbReference type="KEGG" id="ere:EUBREC_1494"/>
<dbReference type="HOGENOM" id="CLU_020352_0_1_9"/>
<dbReference type="UniPathway" id="UPA00340">
    <property type="reaction ID" value="UER00458"/>
</dbReference>
<dbReference type="Proteomes" id="UP000001477">
    <property type="component" value="Chromosome"/>
</dbReference>
<dbReference type="GO" id="GO:0005737">
    <property type="term" value="C:cytoplasm"/>
    <property type="evidence" value="ECO:0007669"/>
    <property type="project" value="UniProtKB-SubCell"/>
</dbReference>
<dbReference type="GO" id="GO:0008776">
    <property type="term" value="F:acetate kinase activity"/>
    <property type="evidence" value="ECO:0007669"/>
    <property type="project" value="UniProtKB-UniRule"/>
</dbReference>
<dbReference type="GO" id="GO:0005524">
    <property type="term" value="F:ATP binding"/>
    <property type="evidence" value="ECO:0007669"/>
    <property type="project" value="UniProtKB-KW"/>
</dbReference>
<dbReference type="GO" id="GO:0000287">
    <property type="term" value="F:magnesium ion binding"/>
    <property type="evidence" value="ECO:0007669"/>
    <property type="project" value="UniProtKB-UniRule"/>
</dbReference>
<dbReference type="GO" id="GO:0006083">
    <property type="term" value="P:acetate metabolic process"/>
    <property type="evidence" value="ECO:0007669"/>
    <property type="project" value="TreeGrafter"/>
</dbReference>
<dbReference type="GO" id="GO:0006085">
    <property type="term" value="P:acetyl-CoA biosynthetic process"/>
    <property type="evidence" value="ECO:0007669"/>
    <property type="project" value="UniProtKB-UniRule"/>
</dbReference>
<dbReference type="CDD" id="cd24010">
    <property type="entry name" value="ASKHA_NBD_AcK_PK"/>
    <property type="match status" value="1"/>
</dbReference>
<dbReference type="Gene3D" id="3.30.420.40">
    <property type="match status" value="2"/>
</dbReference>
<dbReference type="HAMAP" id="MF_00020">
    <property type="entry name" value="Acetate_kinase"/>
    <property type="match status" value="1"/>
</dbReference>
<dbReference type="InterPro" id="IPR004372">
    <property type="entry name" value="Ac/propionate_kinase"/>
</dbReference>
<dbReference type="InterPro" id="IPR000890">
    <property type="entry name" value="Aliphatic_acid_kin_short-chain"/>
</dbReference>
<dbReference type="InterPro" id="IPR023865">
    <property type="entry name" value="Aliphatic_acid_kinase_CS"/>
</dbReference>
<dbReference type="InterPro" id="IPR043129">
    <property type="entry name" value="ATPase_NBD"/>
</dbReference>
<dbReference type="NCBIfam" id="TIGR00016">
    <property type="entry name" value="ackA"/>
    <property type="match status" value="1"/>
</dbReference>
<dbReference type="PANTHER" id="PTHR21060">
    <property type="entry name" value="ACETATE KINASE"/>
    <property type="match status" value="1"/>
</dbReference>
<dbReference type="PANTHER" id="PTHR21060:SF15">
    <property type="entry name" value="ACETATE KINASE-RELATED"/>
    <property type="match status" value="1"/>
</dbReference>
<dbReference type="Pfam" id="PF00871">
    <property type="entry name" value="Acetate_kinase"/>
    <property type="match status" value="1"/>
</dbReference>
<dbReference type="PIRSF" id="PIRSF000722">
    <property type="entry name" value="Acetate_prop_kin"/>
    <property type="match status" value="1"/>
</dbReference>
<dbReference type="PRINTS" id="PR00471">
    <property type="entry name" value="ACETATEKNASE"/>
</dbReference>
<dbReference type="SUPFAM" id="SSF53067">
    <property type="entry name" value="Actin-like ATPase domain"/>
    <property type="match status" value="2"/>
</dbReference>
<dbReference type="PROSITE" id="PS01075">
    <property type="entry name" value="ACETATE_KINASE_1"/>
    <property type="match status" value="1"/>
</dbReference>
<dbReference type="PROSITE" id="PS01076">
    <property type="entry name" value="ACETATE_KINASE_2"/>
    <property type="match status" value="1"/>
</dbReference>
<protein>
    <recommendedName>
        <fullName evidence="1">Acetate kinase</fullName>
        <ecNumber evidence="1">2.7.2.1</ecNumber>
    </recommendedName>
    <alternativeName>
        <fullName evidence="1">Acetokinase</fullName>
    </alternativeName>
</protein>
<name>ACKA_AGARV</name>